<keyword id="KW-0067">ATP-binding</keyword>
<keyword id="KW-0235">DNA replication</keyword>
<keyword id="KW-0238">DNA-binding</keyword>
<keyword id="KW-0244">Early protein</keyword>
<keyword id="KW-0347">Helicase</keyword>
<keyword id="KW-1048">Host nucleus</keyword>
<keyword id="KW-0378">Hydrolase</keyword>
<keyword id="KW-0413">Isomerase</keyword>
<keyword id="KW-1017">Isopeptide bond</keyword>
<keyword id="KW-0547">Nucleotide-binding</keyword>
<keyword id="KW-0597">Phosphoprotein</keyword>
<keyword id="KW-0832">Ubl conjugation</keyword>
<protein>
    <recommendedName>
        <fullName evidence="1">Replication protein E1</fullName>
        <ecNumber evidence="1">5.6.2.4</ecNumber>
    </recommendedName>
    <alternativeName>
        <fullName evidence="1">ATP-dependent helicase E1</fullName>
    </alternativeName>
    <alternativeName>
        <fullName evidence="1">DNA 3'-5' helicase E1</fullName>
    </alternativeName>
</protein>
<organism>
    <name type="scientific">Human papillomavirus 42</name>
    <dbReference type="NCBI Taxonomy" id="10590"/>
    <lineage>
        <taxon>Viruses</taxon>
        <taxon>Monodnaviria</taxon>
        <taxon>Shotokuvirae</taxon>
        <taxon>Cossaviricota</taxon>
        <taxon>Papovaviricetes</taxon>
        <taxon>Zurhausenvirales</taxon>
        <taxon>Papillomaviridae</taxon>
        <taxon>Firstpapillomavirinae</taxon>
        <taxon>Alphapapillomavirus</taxon>
        <taxon>Alphapapillomavirus 1</taxon>
    </lineage>
</organism>
<proteinExistence type="inferred from homology"/>
<reference key="1">
    <citation type="journal article" date="1992" name="Virology">
        <title>Human papillomavirus type 42: new sequences, conserved genome organization.</title>
        <authorList>
            <person name="Philipp W."/>
            <person name="Honore N."/>
            <person name="Sapp M."/>
            <person name="Cole S.T."/>
            <person name="Streeck R.E."/>
        </authorList>
    </citation>
    <scope>NUCLEOTIDE SEQUENCE [GENOMIC DNA]</scope>
</reference>
<organismHost>
    <name type="scientific">Homo sapiens</name>
    <name type="common">Human</name>
    <dbReference type="NCBI Taxonomy" id="9606"/>
</organismHost>
<comment type="function">
    <text evidence="1">ATP-dependent DNA 3'-5' helicase required for initiation of viral DNA replication. It forms a complex with the viral E2 protein. The E1-E2 complex binds to the replication origin which contains binding sites for both proteins. During the initial step, a dimer of E1 interacts with a dimer of protein E2 leading to a complex that binds the viral origin of replication with high specificity. Then, a second dimer of E1 displaces the E2 dimer in an ATP-dependent manner to form the E1 tetramer. Following this, two E1 monomers are added to each half of the site, which results in the formation of two E1 trimers on the viral ori. Subsequently, two hexamers will be created. The double hexamer acts as a bi-directional helicase machinery and unwinds the viral DNA and then recruits the host DNA polymerase to start replication.</text>
</comment>
<comment type="catalytic activity">
    <reaction evidence="1">
        <text>Couples ATP hydrolysis with the unwinding of duplex DNA by translocating in the 3'-5' direction.</text>
        <dbReference type="EC" id="5.6.2.4"/>
    </reaction>
</comment>
<comment type="catalytic activity">
    <reaction evidence="1">
        <text>ATP + H2O = ADP + phosphate + H(+)</text>
        <dbReference type="Rhea" id="RHEA:13065"/>
        <dbReference type="ChEBI" id="CHEBI:15377"/>
        <dbReference type="ChEBI" id="CHEBI:15378"/>
        <dbReference type="ChEBI" id="CHEBI:30616"/>
        <dbReference type="ChEBI" id="CHEBI:43474"/>
        <dbReference type="ChEBI" id="CHEBI:456216"/>
        <dbReference type="EC" id="5.6.2.4"/>
    </reaction>
</comment>
<comment type="subunit">
    <text evidence="1">Can form hexamers. Interacts with E2 protein; this interaction increases E1 DNA binding specificity. Interacts with host DNA polymerase subunit POLA2. Interacts with host single stranded DNA-binding protein RPA1. Interacts with host TOP1; this interaction stimulates the enzymatic activity of TOP1.</text>
</comment>
<comment type="subcellular location">
    <subcellularLocation>
        <location evidence="1">Host nucleus</location>
    </subcellularLocation>
</comment>
<comment type="PTM">
    <text evidence="1">Phosphorylated.</text>
</comment>
<comment type="PTM">
    <text evidence="1">Sumoylated.</text>
</comment>
<comment type="similarity">
    <text evidence="1">Belongs to the papillomaviridae E1 protein family.</text>
</comment>
<comment type="sequence caution" evidence="3">
    <conflict type="erroneous initiation">
        <sequence resource="EMBL-CDS" id="AAA47043"/>
    </conflict>
</comment>
<feature type="chain" id="PRO_0000133140" description="Replication protein E1">
    <location>
        <begin position="1"/>
        <end position="643"/>
    </location>
</feature>
<feature type="domain" description="SF3 helicase" evidence="1">
    <location>
        <begin position="445"/>
        <end position="595"/>
    </location>
</feature>
<feature type="region of interest" description="Disordered" evidence="2">
    <location>
        <begin position="155"/>
        <end position="184"/>
    </location>
</feature>
<feature type="region of interest" description="DNA-binding region" evidence="1">
    <location>
        <begin position="180"/>
        <end position="346"/>
    </location>
</feature>
<feature type="short sequence motif" description="Nuclear localization signal" evidence="1">
    <location>
        <begin position="83"/>
        <end position="85"/>
    </location>
</feature>
<feature type="short sequence motif" description="Nuclear export signal" evidence="1">
    <location>
        <begin position="106"/>
        <end position="115"/>
    </location>
</feature>
<feature type="binding site" evidence="1">
    <location>
        <begin position="471"/>
        <end position="478"/>
    </location>
    <ligand>
        <name>ATP</name>
        <dbReference type="ChEBI" id="CHEBI:30616"/>
    </ligand>
</feature>
<feature type="modified residue" description="Phosphoserine; by host" evidence="1">
    <location>
        <position position="89"/>
    </location>
</feature>
<feature type="modified residue" description="Phosphoserine; by host" evidence="1">
    <location>
        <position position="93"/>
    </location>
</feature>
<feature type="modified residue" description="Phosphoserine; by host" evidence="1">
    <location>
        <position position="107"/>
    </location>
</feature>
<feature type="cross-link" description="Glycyl lysine isopeptide (Lys-Gly) (interchain with G-Cter in SUMO)" evidence="1">
    <location>
        <position position="552"/>
    </location>
</feature>
<gene>
    <name evidence="1" type="primary">E1</name>
</gene>
<accession>P27221</accession>
<dbReference type="EC" id="5.6.2.4" evidence="1"/>
<dbReference type="EMBL" id="M73236">
    <property type="protein sequence ID" value="AAA47043.1"/>
    <property type="status" value="ALT_INIT"/>
    <property type="molecule type" value="Genomic_DNA"/>
</dbReference>
<dbReference type="PIR" id="A39451">
    <property type="entry name" value="W1WL42"/>
</dbReference>
<dbReference type="SMR" id="P27221"/>
<dbReference type="Proteomes" id="UP000009122">
    <property type="component" value="Genome"/>
</dbReference>
<dbReference type="GO" id="GO:0042025">
    <property type="term" value="C:host cell nucleus"/>
    <property type="evidence" value="ECO:0007669"/>
    <property type="project" value="UniProtKB-SubCell"/>
</dbReference>
<dbReference type="GO" id="GO:0005524">
    <property type="term" value="F:ATP binding"/>
    <property type="evidence" value="ECO:0007669"/>
    <property type="project" value="UniProtKB-UniRule"/>
</dbReference>
<dbReference type="GO" id="GO:0016887">
    <property type="term" value="F:ATP hydrolysis activity"/>
    <property type="evidence" value="ECO:0007669"/>
    <property type="project" value="RHEA"/>
</dbReference>
<dbReference type="GO" id="GO:0003677">
    <property type="term" value="F:DNA binding"/>
    <property type="evidence" value="ECO:0007669"/>
    <property type="project" value="UniProtKB-UniRule"/>
</dbReference>
<dbReference type="GO" id="GO:0003678">
    <property type="term" value="F:DNA helicase activity"/>
    <property type="evidence" value="ECO:0007669"/>
    <property type="project" value="UniProtKB-UniRule"/>
</dbReference>
<dbReference type="GO" id="GO:0006260">
    <property type="term" value="P:DNA replication"/>
    <property type="evidence" value="ECO:0007669"/>
    <property type="project" value="UniProtKB-UniRule"/>
</dbReference>
<dbReference type="Gene3D" id="3.40.1310.10">
    <property type="match status" value="1"/>
</dbReference>
<dbReference type="Gene3D" id="3.40.50.300">
    <property type="entry name" value="P-loop containing nucleotide triphosphate hydrolases"/>
    <property type="match status" value="1"/>
</dbReference>
<dbReference type="Gene3D" id="1.10.10.510">
    <property type="entry name" value="Zinc finger, large T-antigen D1 domain"/>
    <property type="match status" value="1"/>
</dbReference>
<dbReference type="HAMAP" id="MF_04000">
    <property type="entry name" value="PPV_E1"/>
    <property type="match status" value="1"/>
</dbReference>
<dbReference type="InterPro" id="IPR014015">
    <property type="entry name" value="Helicase_SF3_DNA-vir"/>
</dbReference>
<dbReference type="InterPro" id="IPR027417">
    <property type="entry name" value="P-loop_NTPase"/>
</dbReference>
<dbReference type="InterPro" id="IPR001177">
    <property type="entry name" value="PPV_DNA_helicase_E1_C"/>
</dbReference>
<dbReference type="InterPro" id="IPR014000">
    <property type="entry name" value="PPV_DNA_helicase_E1_N"/>
</dbReference>
<dbReference type="InterPro" id="IPR046832">
    <property type="entry name" value="PPV_E1_DBD"/>
</dbReference>
<dbReference type="InterPro" id="IPR046935">
    <property type="entry name" value="PPV_E1_DBD_sf"/>
</dbReference>
<dbReference type="InterPro" id="IPR016393">
    <property type="entry name" value="Rep_E1_papillomaV"/>
</dbReference>
<dbReference type="InterPro" id="IPR037102">
    <property type="entry name" value="Znf_lg_T-Ag_D1_dom_sf"/>
</dbReference>
<dbReference type="Pfam" id="PF00519">
    <property type="entry name" value="PPV_E1_C"/>
    <property type="match status" value="1"/>
</dbReference>
<dbReference type="Pfam" id="PF20450">
    <property type="entry name" value="PPV_E1_DBD"/>
    <property type="match status" value="1"/>
</dbReference>
<dbReference type="Pfam" id="PF00524">
    <property type="entry name" value="PPV_E1_N"/>
    <property type="match status" value="1"/>
</dbReference>
<dbReference type="PIRSF" id="PIRSF003383">
    <property type="entry name" value="Rep_E1_papillomaV"/>
    <property type="match status" value="1"/>
</dbReference>
<dbReference type="SUPFAM" id="SSF55464">
    <property type="entry name" value="Origin of replication-binding domain, RBD-like"/>
    <property type="match status" value="1"/>
</dbReference>
<dbReference type="SUPFAM" id="SSF52540">
    <property type="entry name" value="P-loop containing nucleoside triphosphate hydrolases"/>
    <property type="match status" value="1"/>
</dbReference>
<dbReference type="PROSITE" id="PS51206">
    <property type="entry name" value="SF3_HELICASE_1"/>
    <property type="match status" value="1"/>
</dbReference>
<name>VE1_HPV42</name>
<sequence length="643" mass="72055">MADDTGTEEGLGCSGWFCVEAIVDKTTENAISDDEDENVDDSGLDLVDFVDNSTVIHTKQVHAQALLNKQQAHADQEAVQALKRKLLGSPYESPVSDSQHSIDNELSPRLGGLTLCRGSQGAKRRLFQSLENRDSGYGYSEVEVQQTQVEHGHGAVHGTMGNGGAVGSELGVQENEEGSTTSTPTTRVVELLKCKNLHATLLGKFKELFGVSFGDLVRQFKSDKSSCTDWVIAAFGVNHSIAEGFNTLIKADSLYTHIQWLTCTWGMVLLMLIRFKCGKNRTTVSKGLSKLLNIPTNQLLIEPPRLQSVAAAIYWFRSGISNASIVTGDTPEWIQRQTILEHCFADAQFNLTEMVQWAYDNDITEDSDIAYEYAQRADRDSNAAAFLKSNCQAKYVKDCGVMCRHYKKAQMRRMSMGAWIKHRSAKIGDSGDWKPIVKFIRYQQIDFLAFMSAFKKFLHNIPKKSCLVLIGPPNTGKSQFGMSLINFLAGTVISFVNSHSHFWLQPLDSAKIAMLDDATPPCWTYLDIYLRNLLDGNPCSIDRKHKALTVVKCPPLLITSNTDIRTNDKWKYLYSRVSLFEFPNPFPLDTNGNPVYELNDKNWKSFFQRLWSSLEFQESEDEEDYGETGQTFRCVPGTVVRTV</sequence>
<evidence type="ECO:0000255" key="1">
    <source>
        <dbReference type="HAMAP-Rule" id="MF_04000"/>
    </source>
</evidence>
<evidence type="ECO:0000256" key="2">
    <source>
        <dbReference type="SAM" id="MobiDB-lite"/>
    </source>
</evidence>
<evidence type="ECO:0000305" key="3"/>